<name>ZER1_HUMAN</name>
<protein>
    <recommendedName>
        <fullName evidence="8">Protein zer-1 homolog</fullName>
    </recommendedName>
    <alternativeName>
        <fullName>Hzyg</fullName>
    </alternativeName>
    <alternativeName>
        <fullName>Zyg-11 homolog B-like protein</fullName>
    </alternativeName>
    <alternativeName>
        <fullName>Zyg11b-like protein</fullName>
    </alternativeName>
</protein>
<accession>Q7Z7L7</accession>
<accession>O00156</accession>
<accession>Q5T272</accession>
<accession>Q5T273</accession>
<sequence length="766" mass="88169">MASDTPESLMALCTDFCLRNLDGTLGYLLDKETLRLHPDIFLPSEICDRLVNEYVELVNAACNFEPHESFFSLFSDPRSTRLTRIHLREDLVQDQDLEAIRKQDLVELYLTNCEKLSAKSLQTLRSFSHTLVSLSLFGCTNIFYEEENPGGCEDEYLVNPTCQVLVKDFTFEGFSRLRFLNLGRMIDWVPVESLLRPLNSLAALDLSGIQTSDAAFLTQWKDSLVSLVLYNMDLSDDHIRVIVQLHKLRHLDISRDRLSSYYKFKLTREVLSLFVQKLGNLMSLDISGHMILENCSISKMEEEAGQTSIEPSKSSIIPFRALKRPLQFLGLFENSLCRLTHIPAYKVSGDKNEEQVLNAIEAYTEHRPEITSRAINLLFDIARIERCNQLLRALKLVITALKCHKYDRNIQVTGSAALFYLTNSEYRSEQSVKLRRQVIQVVLNGMESYQEVTVQRNCCLTLCNFSIPEELEFQYRRVNELLLSILNPTRQDESIQRIAVHLCNALVCQVDNDHKEAVGKMGFVVTMLKLIQKKLLDKTCDQVMEFSWSALWNITDETPDNCEMFLNFNGMKLFLDCLKEFPEKQELHRNMLGLLGNVAEVKELRPQLMTSQFISVFSNLLESKADGIEVSYNACGVLSHIMFDGPEAWGVCEPQREEVEERMWAAIQSWDINSRRNINYRSFEPILRLLPQGISPVSQHWATWALYNLVSVYPDKYCPLLIKEGGMPLLRDIIKMATARQETKEMARKVIEHCSNFKEENMDTSR</sequence>
<keyword id="KW-0002">3D-structure</keyword>
<keyword id="KW-0007">Acetylation</keyword>
<keyword id="KW-0433">Leucine-rich repeat</keyword>
<keyword id="KW-1267">Proteomics identification</keyword>
<keyword id="KW-1185">Reference proteome</keyword>
<keyword id="KW-0677">Repeat</keyword>
<keyword id="KW-0833">Ubl conjugation pathway</keyword>
<gene>
    <name evidence="9" type="primary">ZER1</name>
    <name type="synonym">C9orf60</name>
    <name type="synonym">ZYG</name>
    <name evidence="7" type="synonym">ZYG11BL</name>
</gene>
<comment type="function">
    <text evidence="2 3 4 5 6">Serves as substrate adapter subunit in the E3 ubiquitin ligase complex ZYG11B-CUL2-Elongin BC (PubMed:17304241, PubMed:31273098). Acts to target substrates bearing N-terminal degrons for proteasomal degradation with the first four residues of substrates being the key recognition elements (PubMed:33093214, PubMed:34214466, PubMed:36496439). Involved in the clearance of proteolytic fragments generated by caspase cleavage during apoptosis since N-terminal glycine degrons are strongly enriched at caspase cleavage sites. Also important in the quality control of protein N-myristoylation in which N-terminal glycine degrons are conditionally exposed after a failure of N-myristoylation (PubMed:31273098).</text>
</comment>
<comment type="subunit">
    <text evidence="2">Interacts with the ELOC-ELOB/Elongin BC complex. Part of an E3 ubiquitin ligase complex including ZER1, CUL2 and Elongin BC.</text>
</comment>
<comment type="interaction">
    <interactant intactId="EBI-1811449">
        <id>Q7Z7L7</id>
    </interactant>
    <interactant intactId="EBI-20863487">
        <id>Q9Y2C4</id>
        <label>EXOG</label>
    </interactant>
    <organismsDiffer>false</organismsDiffer>
    <experiments>2</experiments>
</comment>
<comment type="interaction">
    <interactant intactId="EBI-1811449">
        <id>Q7Z7L7</id>
    </interactant>
    <interactant intactId="EBI-744891">
        <id>Q5JSZ5</id>
        <label>PRRC2B</label>
    </interactant>
    <organismsDiffer>false</organismsDiffer>
    <experiments>2</experiments>
</comment>
<comment type="tissue specificity">
    <text evidence="1">Expressed in testis, spermatocytes and spermatids (at protein level). Expressed in spermatocytes, spermatids, prostate, skeletal muscle, ovary, small intestine, heart, brain and pancreas.</text>
</comment>
<comment type="similarity">
    <text evidence="8">Belongs to the zyg-11 family.</text>
</comment>
<dbReference type="EMBL" id="X99802">
    <property type="protein sequence ID" value="CAA68137.1"/>
    <property type="molecule type" value="mRNA"/>
</dbReference>
<dbReference type="EMBL" id="AL441992">
    <property type="status" value="NOT_ANNOTATED_CDS"/>
    <property type="molecule type" value="Genomic_DNA"/>
</dbReference>
<dbReference type="EMBL" id="BC052563">
    <property type="protein sequence ID" value="AAH52563.1"/>
    <property type="molecule type" value="mRNA"/>
</dbReference>
<dbReference type="CCDS" id="CCDS6910.1"/>
<dbReference type="RefSeq" id="NP_001362883.1">
    <property type="nucleotide sequence ID" value="NM_001375954.1"/>
</dbReference>
<dbReference type="RefSeq" id="NP_001362884.1">
    <property type="nucleotide sequence ID" value="NM_001375955.1"/>
</dbReference>
<dbReference type="RefSeq" id="NP_001362885.1">
    <property type="nucleotide sequence ID" value="NM_001375956.1"/>
</dbReference>
<dbReference type="RefSeq" id="NP_006327.2">
    <property type="nucleotide sequence ID" value="NM_006336.3"/>
</dbReference>
<dbReference type="RefSeq" id="XP_005251702.1">
    <property type="nucleotide sequence ID" value="XM_005251645.2"/>
</dbReference>
<dbReference type="RefSeq" id="XP_011516424.1">
    <property type="nucleotide sequence ID" value="XM_011518122.2"/>
</dbReference>
<dbReference type="RefSeq" id="XP_016869674.1">
    <property type="nucleotide sequence ID" value="XM_017014185.1"/>
</dbReference>
<dbReference type="PDB" id="7EP3">
    <property type="method" value="X-ray"/>
    <property type="resolution" value="1.51 A"/>
    <property type="chains" value="A=520-766"/>
</dbReference>
<dbReference type="PDB" id="7EP4">
    <property type="method" value="X-ray"/>
    <property type="resolution" value="2.07 A"/>
    <property type="chains" value="A/B=518-766"/>
</dbReference>
<dbReference type="PDB" id="7EP5">
    <property type="method" value="X-ray"/>
    <property type="resolution" value="2.02 A"/>
    <property type="chains" value="A/B=518-766"/>
</dbReference>
<dbReference type="PDB" id="7XYS">
    <property type="method" value="X-ray"/>
    <property type="resolution" value="1.70 A"/>
    <property type="chains" value="A/B/C/D=518-766"/>
</dbReference>
<dbReference type="PDB" id="7XYT">
    <property type="method" value="X-ray"/>
    <property type="resolution" value="1.50 A"/>
    <property type="chains" value="A/B/C/D=518-766"/>
</dbReference>
<dbReference type="PDB" id="7XYU">
    <property type="method" value="X-ray"/>
    <property type="resolution" value="2.70 A"/>
    <property type="chains" value="A/B/C/D=520-766"/>
</dbReference>
<dbReference type="PDBsum" id="7EP3"/>
<dbReference type="PDBsum" id="7EP4"/>
<dbReference type="PDBsum" id="7EP5"/>
<dbReference type="PDBsum" id="7XYS"/>
<dbReference type="PDBsum" id="7XYT"/>
<dbReference type="PDBsum" id="7XYU"/>
<dbReference type="SMR" id="Q7Z7L7"/>
<dbReference type="BioGRID" id="115709">
    <property type="interactions" value="91"/>
</dbReference>
<dbReference type="ComplexPortal" id="CPX-2222">
    <property type="entry name" value="ZER1-Elongin C-Elongin B E3 ubiquitin ligase complex"/>
</dbReference>
<dbReference type="CORUM" id="Q7Z7L7"/>
<dbReference type="FunCoup" id="Q7Z7L7">
    <property type="interactions" value="169"/>
</dbReference>
<dbReference type="IntAct" id="Q7Z7L7">
    <property type="interactions" value="73"/>
</dbReference>
<dbReference type="MINT" id="Q7Z7L7"/>
<dbReference type="STRING" id="9606.ENSP00000291900"/>
<dbReference type="iPTMnet" id="Q7Z7L7"/>
<dbReference type="PhosphoSitePlus" id="Q7Z7L7"/>
<dbReference type="BioMuta" id="ZER1"/>
<dbReference type="DMDM" id="68566100"/>
<dbReference type="jPOST" id="Q7Z7L7"/>
<dbReference type="MassIVE" id="Q7Z7L7"/>
<dbReference type="PaxDb" id="9606-ENSP00000291900"/>
<dbReference type="PeptideAtlas" id="Q7Z7L7"/>
<dbReference type="ProteomicsDB" id="69562"/>
<dbReference type="Pumba" id="Q7Z7L7"/>
<dbReference type="Antibodypedia" id="31261">
    <property type="antibodies" value="68 antibodies from 21 providers"/>
</dbReference>
<dbReference type="DNASU" id="10444"/>
<dbReference type="Ensembl" id="ENST00000291900.7">
    <property type="protein sequence ID" value="ENSP00000291900.2"/>
    <property type="gene ID" value="ENSG00000160445.11"/>
</dbReference>
<dbReference type="GeneID" id="10444"/>
<dbReference type="KEGG" id="hsa:10444"/>
<dbReference type="MANE-Select" id="ENST00000291900.7">
    <property type="protein sequence ID" value="ENSP00000291900.2"/>
    <property type="RefSeq nucleotide sequence ID" value="NM_006336.4"/>
    <property type="RefSeq protein sequence ID" value="NP_006327.2"/>
</dbReference>
<dbReference type="UCSC" id="uc004bwa.3">
    <property type="organism name" value="human"/>
</dbReference>
<dbReference type="AGR" id="HGNC:30960"/>
<dbReference type="CTD" id="10444"/>
<dbReference type="DisGeNET" id="10444"/>
<dbReference type="GeneCards" id="ZER1"/>
<dbReference type="HGNC" id="HGNC:30960">
    <property type="gene designation" value="ZER1"/>
</dbReference>
<dbReference type="HPA" id="ENSG00000160445">
    <property type="expression patterns" value="Low tissue specificity"/>
</dbReference>
<dbReference type="MIM" id="617764">
    <property type="type" value="gene"/>
</dbReference>
<dbReference type="neXtProt" id="NX_Q7Z7L7"/>
<dbReference type="OpenTargets" id="ENSG00000160445"/>
<dbReference type="PharmGKB" id="PA162409637"/>
<dbReference type="VEuPathDB" id="HostDB:ENSG00000160445"/>
<dbReference type="eggNOG" id="KOG3665">
    <property type="taxonomic scope" value="Eukaryota"/>
</dbReference>
<dbReference type="GeneTree" id="ENSGT00530000063187"/>
<dbReference type="HOGENOM" id="CLU_011533_0_0_1"/>
<dbReference type="InParanoid" id="Q7Z7L7"/>
<dbReference type="OMA" id="QIRRKHA"/>
<dbReference type="OrthoDB" id="5783533at2759"/>
<dbReference type="PAN-GO" id="Q7Z7L7">
    <property type="GO annotations" value="1 GO annotation based on evolutionary models"/>
</dbReference>
<dbReference type="PhylomeDB" id="Q7Z7L7"/>
<dbReference type="TreeFam" id="TF313007"/>
<dbReference type="PathwayCommons" id="Q7Z7L7"/>
<dbReference type="SignaLink" id="Q7Z7L7"/>
<dbReference type="BioGRID-ORCS" id="10444">
    <property type="hits" value="18 hits in 1151 CRISPR screens"/>
</dbReference>
<dbReference type="ChiTaRS" id="ZER1">
    <property type="organism name" value="human"/>
</dbReference>
<dbReference type="GenomeRNAi" id="10444"/>
<dbReference type="Pharos" id="Q7Z7L7">
    <property type="development level" value="Tbio"/>
</dbReference>
<dbReference type="PRO" id="PR:Q7Z7L7"/>
<dbReference type="Proteomes" id="UP000005640">
    <property type="component" value="Chromosome 9"/>
</dbReference>
<dbReference type="RNAct" id="Q7Z7L7">
    <property type="molecule type" value="protein"/>
</dbReference>
<dbReference type="Bgee" id="ENSG00000160445">
    <property type="expression patterns" value="Expressed in right frontal lobe and 177 other cell types or tissues"/>
</dbReference>
<dbReference type="ExpressionAtlas" id="Q7Z7L7">
    <property type="expression patterns" value="baseline and differential"/>
</dbReference>
<dbReference type="GO" id="GO:0031462">
    <property type="term" value="C:Cul2-RING ubiquitin ligase complex"/>
    <property type="evidence" value="ECO:0000314"/>
    <property type="project" value="UniProtKB"/>
</dbReference>
<dbReference type="GO" id="GO:0032436">
    <property type="term" value="P:positive regulation of proteasomal ubiquitin-dependent protein catabolic process"/>
    <property type="evidence" value="ECO:0000315"/>
    <property type="project" value="UniProtKB"/>
</dbReference>
<dbReference type="GO" id="GO:0006515">
    <property type="term" value="P:protein quality control for misfolded or incompletely synthesized proteins"/>
    <property type="evidence" value="ECO:0000315"/>
    <property type="project" value="UniProtKB"/>
</dbReference>
<dbReference type="FunFam" id="1.25.10.10:FF:000111">
    <property type="entry name" value="Protein zer-1 homolog"/>
    <property type="match status" value="1"/>
</dbReference>
<dbReference type="FunFam" id="3.80.10.10:FF:000160">
    <property type="entry name" value="Protein zer-1 homolog isoform X1"/>
    <property type="match status" value="1"/>
</dbReference>
<dbReference type="FunFam" id="3.80.10.10:FF:000085">
    <property type="entry name" value="protein zer-1 homolog isoform X1"/>
    <property type="match status" value="1"/>
</dbReference>
<dbReference type="Gene3D" id="1.25.10.10">
    <property type="entry name" value="Leucine-rich Repeat Variant"/>
    <property type="match status" value="1"/>
</dbReference>
<dbReference type="Gene3D" id="3.80.10.10">
    <property type="entry name" value="Ribonuclease Inhibitor"/>
    <property type="match status" value="2"/>
</dbReference>
<dbReference type="InterPro" id="IPR011989">
    <property type="entry name" value="ARM-like"/>
</dbReference>
<dbReference type="InterPro" id="IPR016024">
    <property type="entry name" value="ARM-type_fold"/>
</dbReference>
<dbReference type="InterPro" id="IPR000225">
    <property type="entry name" value="Armadillo"/>
</dbReference>
<dbReference type="InterPro" id="IPR032675">
    <property type="entry name" value="LRR_dom_sf"/>
</dbReference>
<dbReference type="InterPro" id="IPR056845">
    <property type="entry name" value="LRR_Zer-1"/>
</dbReference>
<dbReference type="InterPro" id="IPR055142">
    <property type="entry name" value="ZER1-like_C"/>
</dbReference>
<dbReference type="InterPro" id="IPR051341">
    <property type="entry name" value="Zyg-11_UBL_adapter"/>
</dbReference>
<dbReference type="PANTHER" id="PTHR12904">
    <property type="match status" value="1"/>
</dbReference>
<dbReference type="PANTHER" id="PTHR12904:SF23">
    <property type="entry name" value="PROTEIN ZER-1 HOMOLOG"/>
    <property type="match status" value="1"/>
</dbReference>
<dbReference type="Pfam" id="PF25013">
    <property type="entry name" value="LRR_Zer-1"/>
    <property type="match status" value="1"/>
</dbReference>
<dbReference type="Pfam" id="PF22964">
    <property type="entry name" value="ZER1-like_2nd"/>
    <property type="match status" value="1"/>
</dbReference>
<dbReference type="SMART" id="SM00185">
    <property type="entry name" value="ARM"/>
    <property type="match status" value="4"/>
</dbReference>
<dbReference type="SUPFAM" id="SSF48371">
    <property type="entry name" value="ARM repeat"/>
    <property type="match status" value="1"/>
</dbReference>
<dbReference type="SUPFAM" id="SSF52047">
    <property type="entry name" value="RNI-like"/>
    <property type="match status" value="1"/>
</dbReference>
<reference key="1">
    <citation type="journal article" date="2001" name="Mol. Hum. Reprod.">
        <title>Meiotic human sperm cells express a leucine-rich homologue of Caenorhabditis elegans early embryogenesis gene, Zyg-11.</title>
        <authorList>
            <person name="Feral C."/>
            <person name="Wu Y.-Q."/>
            <person name="Pawlak A."/>
            <person name="Guellaen G."/>
        </authorList>
    </citation>
    <scope>NUCLEOTIDE SEQUENCE [MRNA]</scope>
    <scope>TISSUE SPECIFICITY</scope>
    <source>
        <tissue>Testis</tissue>
    </source>
</reference>
<reference key="2">
    <citation type="journal article" date="2004" name="Nature">
        <title>DNA sequence and analysis of human chromosome 9.</title>
        <authorList>
            <person name="Humphray S.J."/>
            <person name="Oliver K."/>
            <person name="Hunt A.R."/>
            <person name="Plumb R.W."/>
            <person name="Loveland J.E."/>
            <person name="Howe K.L."/>
            <person name="Andrews T.D."/>
            <person name="Searle S."/>
            <person name="Hunt S.E."/>
            <person name="Scott C.E."/>
            <person name="Jones M.C."/>
            <person name="Ainscough R."/>
            <person name="Almeida J.P."/>
            <person name="Ambrose K.D."/>
            <person name="Ashwell R.I.S."/>
            <person name="Babbage A.K."/>
            <person name="Babbage S."/>
            <person name="Bagguley C.L."/>
            <person name="Bailey J."/>
            <person name="Banerjee R."/>
            <person name="Barker D.J."/>
            <person name="Barlow K.F."/>
            <person name="Bates K."/>
            <person name="Beasley H."/>
            <person name="Beasley O."/>
            <person name="Bird C.P."/>
            <person name="Bray-Allen S."/>
            <person name="Brown A.J."/>
            <person name="Brown J.Y."/>
            <person name="Burford D."/>
            <person name="Burrill W."/>
            <person name="Burton J."/>
            <person name="Carder C."/>
            <person name="Carter N.P."/>
            <person name="Chapman J.C."/>
            <person name="Chen Y."/>
            <person name="Clarke G."/>
            <person name="Clark S.Y."/>
            <person name="Clee C.M."/>
            <person name="Clegg S."/>
            <person name="Collier R.E."/>
            <person name="Corby N."/>
            <person name="Crosier M."/>
            <person name="Cummings A.T."/>
            <person name="Davies J."/>
            <person name="Dhami P."/>
            <person name="Dunn M."/>
            <person name="Dutta I."/>
            <person name="Dyer L.W."/>
            <person name="Earthrowl M.E."/>
            <person name="Faulkner L."/>
            <person name="Fleming C.J."/>
            <person name="Frankish A."/>
            <person name="Frankland J.A."/>
            <person name="French L."/>
            <person name="Fricker D.G."/>
            <person name="Garner P."/>
            <person name="Garnett J."/>
            <person name="Ghori J."/>
            <person name="Gilbert J.G.R."/>
            <person name="Glison C."/>
            <person name="Grafham D.V."/>
            <person name="Gribble S."/>
            <person name="Griffiths C."/>
            <person name="Griffiths-Jones S."/>
            <person name="Grocock R."/>
            <person name="Guy J."/>
            <person name="Hall R.E."/>
            <person name="Hammond S."/>
            <person name="Harley J.L."/>
            <person name="Harrison E.S.I."/>
            <person name="Hart E.A."/>
            <person name="Heath P.D."/>
            <person name="Henderson C.D."/>
            <person name="Hopkins B.L."/>
            <person name="Howard P.J."/>
            <person name="Howden P.J."/>
            <person name="Huckle E."/>
            <person name="Johnson C."/>
            <person name="Johnson D."/>
            <person name="Joy A.A."/>
            <person name="Kay M."/>
            <person name="Keenan S."/>
            <person name="Kershaw J.K."/>
            <person name="Kimberley A.M."/>
            <person name="King A."/>
            <person name="Knights A."/>
            <person name="Laird G.K."/>
            <person name="Langford C."/>
            <person name="Lawlor S."/>
            <person name="Leongamornlert D.A."/>
            <person name="Leversha M."/>
            <person name="Lloyd C."/>
            <person name="Lloyd D.M."/>
            <person name="Lovell J."/>
            <person name="Martin S."/>
            <person name="Mashreghi-Mohammadi M."/>
            <person name="Matthews L."/>
            <person name="McLaren S."/>
            <person name="McLay K.E."/>
            <person name="McMurray A."/>
            <person name="Milne S."/>
            <person name="Nickerson T."/>
            <person name="Nisbett J."/>
            <person name="Nordsiek G."/>
            <person name="Pearce A.V."/>
            <person name="Peck A.I."/>
            <person name="Porter K.M."/>
            <person name="Pandian R."/>
            <person name="Pelan S."/>
            <person name="Phillimore B."/>
            <person name="Povey S."/>
            <person name="Ramsey Y."/>
            <person name="Rand V."/>
            <person name="Scharfe M."/>
            <person name="Sehra H.K."/>
            <person name="Shownkeen R."/>
            <person name="Sims S.K."/>
            <person name="Skuce C.D."/>
            <person name="Smith M."/>
            <person name="Steward C.A."/>
            <person name="Swarbreck D."/>
            <person name="Sycamore N."/>
            <person name="Tester J."/>
            <person name="Thorpe A."/>
            <person name="Tracey A."/>
            <person name="Tromans A."/>
            <person name="Thomas D.W."/>
            <person name="Wall M."/>
            <person name="Wallis J.M."/>
            <person name="West A.P."/>
            <person name="Whitehead S.L."/>
            <person name="Willey D.L."/>
            <person name="Williams S.A."/>
            <person name="Wilming L."/>
            <person name="Wray P.W."/>
            <person name="Young L."/>
            <person name="Ashurst J.L."/>
            <person name="Coulson A."/>
            <person name="Blocker H."/>
            <person name="Durbin R.M."/>
            <person name="Sulston J.E."/>
            <person name="Hubbard T."/>
            <person name="Jackson M.J."/>
            <person name="Bentley D.R."/>
            <person name="Beck S."/>
            <person name="Rogers J."/>
            <person name="Dunham I."/>
        </authorList>
    </citation>
    <scope>NUCLEOTIDE SEQUENCE [LARGE SCALE GENOMIC DNA]</scope>
</reference>
<reference key="3">
    <citation type="journal article" date="2004" name="Genome Res.">
        <title>The status, quality, and expansion of the NIH full-length cDNA project: the Mammalian Gene Collection (MGC).</title>
        <authorList>
            <consortium name="The MGC Project Team"/>
        </authorList>
    </citation>
    <scope>NUCLEOTIDE SEQUENCE [LARGE SCALE MRNA]</scope>
    <source>
        <tissue>Lymph</tissue>
    </source>
</reference>
<reference key="4">
    <citation type="journal article" date="2007" name="EMBO Rep.">
        <title>The Caenorhabditis elegans cell-cycle regulator ZYG-11 defines a conserved family of CUL-2 complex components.</title>
        <authorList>
            <person name="Vasudevan S."/>
            <person name="Starostina N.G."/>
            <person name="Kipreos E.T."/>
        </authorList>
    </citation>
    <scope>FUNCTION</scope>
    <scope>INTERACTION WITH ELOC</scope>
    <scope>IDENTIFICATION IN COMPLEX WITH ELOB; ELOC AND CUL2</scope>
    <scope>MUTAGENESIS OF LEU-9</scope>
</reference>
<reference key="5">
    <citation type="journal article" date="2012" name="Proc. Natl. Acad. Sci. U.S.A.">
        <title>N-terminal acetylome analyses and functional insights of the N-terminal acetyltransferase NatB.</title>
        <authorList>
            <person name="Van Damme P."/>
            <person name="Lasa M."/>
            <person name="Polevoda B."/>
            <person name="Gazquez C."/>
            <person name="Elosegui-Artola A."/>
            <person name="Kim D.S."/>
            <person name="De Juan-Pardo E."/>
            <person name="Demeyer K."/>
            <person name="Hole K."/>
            <person name="Larrea E."/>
            <person name="Timmerman E."/>
            <person name="Prieto J."/>
            <person name="Arnesen T."/>
            <person name="Sherman F."/>
            <person name="Gevaert K."/>
            <person name="Aldabe R."/>
        </authorList>
    </citation>
    <scope>ACETYLATION [LARGE SCALE ANALYSIS] AT ALA-2</scope>
    <scope>CLEAVAGE OF INITIATOR METHIONINE [LARGE SCALE ANALYSIS]</scope>
    <scope>IDENTIFICATION BY MASS SPECTROMETRY [LARGE SCALE ANALYSIS]</scope>
</reference>
<reference key="6">
    <citation type="journal article" date="2019" name="Science">
        <title>A glycine-specific N-degron pathway mediates the quality control of protein N-myristoylation.</title>
        <authorList>
            <person name="Timms R.T."/>
            <person name="Zhang Z."/>
            <person name="Rhee D.Y."/>
            <person name="Harper J.W."/>
            <person name="Koren I."/>
            <person name="Elledge S.J."/>
        </authorList>
    </citation>
    <scope>FUNCTION</scope>
</reference>
<reference key="7">
    <citation type="journal article" date="2020" name="Science">
        <title>Enteroviral 3C protease activates the human NLRP1 inflammasome in airway epithelia.</title>
        <authorList>
            <person name="Robinson K.S."/>
            <person name="Teo D.E.T."/>
            <person name="Tan K.S."/>
            <person name="Toh G.A."/>
            <person name="Ong H.H."/>
            <person name="Lim C.K."/>
            <person name="Lay K."/>
            <person name="Au B.V."/>
            <person name="Lew T.S."/>
            <person name="Chu J.J.H."/>
            <person name="Chow V.T.K."/>
            <person name="Wang Y."/>
            <person name="Zhong F.L."/>
            <person name="Reversade B."/>
        </authorList>
    </citation>
    <scope>FUNCTION</scope>
</reference>
<reference evidence="10 11 12" key="8">
    <citation type="journal article" date="2021" name="Mol. Cell">
        <title>Molecular basis for recognition of Gly/N-degrons by CRL2ZYG11B and CRL2ZER1.</title>
        <authorList>
            <person name="Yan X."/>
            <person name="Li Y."/>
            <person name="Wang G."/>
            <person name="Zhou Z."/>
            <person name="Song G."/>
            <person name="Feng Q."/>
            <person name="Zhao Y."/>
            <person name="Mi W."/>
            <person name="Ma Z."/>
            <person name="Dong C."/>
        </authorList>
    </citation>
    <scope>X-RAY CRYSTALLOGRAPHY (1.51 ANGSTROMS) OF 520-766</scope>
    <scope>FUNCTION</scope>
</reference>
<reference evidence="13 14 15" key="9">
    <citation type="journal article" date="2022" name="Nat. Commun.">
        <title>CRL2ZER1/ZYG11B recognizes small N-terminal residues for degradation.</title>
        <authorList>
            <person name="Li Y."/>
            <person name="Zhao Y."/>
            <person name="Yan X."/>
            <person name="Ye C."/>
            <person name="Weirich S."/>
            <person name="Zhang B."/>
            <person name="Wang X."/>
            <person name="Song L."/>
            <person name="Jiang C."/>
            <person name="Jeltsch A."/>
            <person name="Dong C."/>
            <person name="Mi W."/>
        </authorList>
    </citation>
    <scope>X-RAY CRYSTALLOGRAPHY (1.50 ANGSTROMS) OF 518-766</scope>
    <scope>FUNCTION</scope>
    <scope>MUTAGENESIS OF TRP-552 AND ASN-597</scope>
</reference>
<organism>
    <name type="scientific">Homo sapiens</name>
    <name type="common">Human</name>
    <dbReference type="NCBI Taxonomy" id="9606"/>
    <lineage>
        <taxon>Eukaryota</taxon>
        <taxon>Metazoa</taxon>
        <taxon>Chordata</taxon>
        <taxon>Craniata</taxon>
        <taxon>Vertebrata</taxon>
        <taxon>Euteleostomi</taxon>
        <taxon>Mammalia</taxon>
        <taxon>Eutheria</taxon>
        <taxon>Euarchontoglires</taxon>
        <taxon>Primates</taxon>
        <taxon>Haplorrhini</taxon>
        <taxon>Catarrhini</taxon>
        <taxon>Hominidae</taxon>
        <taxon>Homo</taxon>
    </lineage>
</organism>
<proteinExistence type="evidence at protein level"/>
<evidence type="ECO:0000269" key="1">
    <source>
    </source>
</evidence>
<evidence type="ECO:0000269" key="2">
    <source>
    </source>
</evidence>
<evidence type="ECO:0000269" key="3">
    <source>
    </source>
</evidence>
<evidence type="ECO:0000269" key="4">
    <source>
    </source>
</evidence>
<evidence type="ECO:0000269" key="5">
    <source>
    </source>
</evidence>
<evidence type="ECO:0000269" key="6">
    <source>
    </source>
</evidence>
<evidence type="ECO:0000303" key="7">
    <source>
    </source>
</evidence>
<evidence type="ECO:0000305" key="8"/>
<evidence type="ECO:0000312" key="9">
    <source>
        <dbReference type="HGNC" id="HGNC:30960"/>
    </source>
</evidence>
<evidence type="ECO:0007744" key="10">
    <source>
        <dbReference type="PDB" id="7EP3"/>
    </source>
</evidence>
<evidence type="ECO:0007744" key="11">
    <source>
        <dbReference type="PDB" id="7EP4"/>
    </source>
</evidence>
<evidence type="ECO:0007744" key="12">
    <source>
        <dbReference type="PDB" id="7EP5"/>
    </source>
</evidence>
<evidence type="ECO:0007744" key="13">
    <source>
        <dbReference type="PDB" id="7XYS"/>
    </source>
</evidence>
<evidence type="ECO:0007744" key="14">
    <source>
        <dbReference type="PDB" id="7XYT"/>
    </source>
</evidence>
<evidence type="ECO:0007744" key="15">
    <source>
        <dbReference type="PDB" id="7XYU"/>
    </source>
</evidence>
<evidence type="ECO:0007744" key="16">
    <source>
    </source>
</evidence>
<evidence type="ECO:0007829" key="17">
    <source>
        <dbReference type="PDB" id="7EP3"/>
    </source>
</evidence>
<evidence type="ECO:0007829" key="18">
    <source>
        <dbReference type="PDB" id="7XYT"/>
    </source>
</evidence>
<feature type="initiator methionine" description="Removed" evidence="16">
    <location>
        <position position="1"/>
    </location>
</feature>
<feature type="chain" id="PRO_0000066598" description="Protein zer-1 homolog">
    <location>
        <begin position="2"/>
        <end position="766"/>
    </location>
</feature>
<feature type="repeat" description="LRR 1">
    <location>
        <begin position="226"/>
        <end position="245"/>
    </location>
</feature>
<feature type="repeat" description="LRR 2">
    <location>
        <begin position="246"/>
        <end position="268"/>
    </location>
</feature>
<feature type="repeat" description="LRR 3">
    <location>
        <begin position="278"/>
        <end position="302"/>
    </location>
</feature>
<feature type="repeat" description="ARM 1">
    <location>
        <begin position="427"/>
        <end position="467"/>
    </location>
</feature>
<feature type="repeat" description="ARM 2">
    <location>
        <begin position="511"/>
        <end position="556"/>
    </location>
</feature>
<feature type="repeat" description="ARM 3">
    <location>
        <begin position="558"/>
        <end position="600"/>
    </location>
</feature>
<feature type="repeat" description="ARM 4">
    <location>
        <begin position="602"/>
        <end position="643"/>
    </location>
</feature>
<feature type="repeat" description="ARM 5">
    <location>
        <begin position="714"/>
        <end position="756"/>
    </location>
</feature>
<feature type="modified residue" description="N-acetylalanine" evidence="16">
    <location>
        <position position="2"/>
    </location>
</feature>
<feature type="sequence variant" id="VAR_060159" description="In dbSNP:rs13299702.">
    <original>T</original>
    <variation>I</variation>
    <location>
        <position position="539"/>
    </location>
</feature>
<feature type="mutagenesis site" description="Abolishes interaction with ELOC." evidence="2">
    <original>L</original>
    <variation>S</variation>
    <location>
        <position position="9"/>
    </location>
</feature>
<feature type="mutagenesis site" description="Complete loss of N-degron binding." evidence="6">
    <original>W</original>
    <variation>A</variation>
    <location>
        <position position="552"/>
    </location>
</feature>
<feature type="mutagenesis site" description="Complete loss of N-degron binding." evidence="6">
    <original>N</original>
    <variation>A</variation>
    <location>
        <position position="597"/>
    </location>
</feature>
<feature type="sequence conflict" description="In Ref. 1; CAA68137." evidence="8" ref="1">
    <original>R</original>
    <variation>G</variation>
    <location>
        <position position="249"/>
    </location>
</feature>
<feature type="sequence conflict" description="In Ref. 1; CAA68137." evidence="8" ref="1">
    <original>A</original>
    <variation>L</variation>
    <location>
        <position position="417"/>
    </location>
</feature>
<feature type="sequence conflict" description="In Ref. 1; CAA68137." evidence="8" ref="1">
    <original>H</original>
    <variation>I</variation>
    <location>
        <position position="588"/>
    </location>
</feature>
<feature type="sequence conflict" description="In Ref. 1; CAA68137." evidence="8" ref="1">
    <original>E</original>
    <variation>K</variation>
    <location>
        <position position="653"/>
    </location>
</feature>
<feature type="helix" evidence="18">
    <location>
        <begin position="518"/>
        <end position="521"/>
    </location>
</feature>
<feature type="helix" evidence="18">
    <location>
        <begin position="523"/>
        <end position="536"/>
    </location>
</feature>
<feature type="helix" evidence="18">
    <location>
        <begin position="542"/>
        <end position="554"/>
    </location>
</feature>
<feature type="turn" evidence="18">
    <location>
        <begin position="555"/>
        <end position="557"/>
    </location>
</feature>
<feature type="helix" evidence="18">
    <location>
        <begin position="559"/>
        <end position="567"/>
    </location>
</feature>
<feature type="helix" evidence="18">
    <location>
        <begin position="570"/>
        <end position="580"/>
    </location>
</feature>
<feature type="helix" evidence="18">
    <location>
        <begin position="585"/>
        <end position="599"/>
    </location>
</feature>
<feature type="turn" evidence="18">
    <location>
        <begin position="602"/>
        <end position="604"/>
    </location>
</feature>
<feature type="helix" evidence="18">
    <location>
        <begin position="605"/>
        <end position="608"/>
    </location>
</feature>
<feature type="helix" evidence="18">
    <location>
        <begin position="611"/>
        <end position="620"/>
    </location>
</feature>
<feature type="turn" evidence="18">
    <location>
        <begin position="625"/>
        <end position="628"/>
    </location>
</feature>
<feature type="helix" evidence="18">
    <location>
        <begin position="629"/>
        <end position="643"/>
    </location>
</feature>
<feature type="helix" evidence="18">
    <location>
        <begin position="646"/>
        <end position="648"/>
    </location>
</feature>
<feature type="helix" evidence="18">
    <location>
        <begin position="656"/>
        <end position="669"/>
    </location>
</feature>
<feature type="helix" evidence="18">
    <location>
        <begin position="684"/>
        <end position="687"/>
    </location>
</feature>
<feature type="helix" evidence="18">
    <location>
        <begin position="696"/>
        <end position="712"/>
    </location>
</feature>
<feature type="helix" evidence="18">
    <location>
        <begin position="714"/>
        <end position="723"/>
    </location>
</feature>
<feature type="helix" evidence="18">
    <location>
        <begin position="726"/>
        <end position="734"/>
    </location>
</feature>
<feature type="strand" evidence="17">
    <location>
        <begin position="737"/>
        <end position="739"/>
    </location>
</feature>
<feature type="helix" evidence="18">
    <location>
        <begin position="741"/>
        <end position="756"/>
    </location>
</feature>